<protein>
    <recommendedName>
        <fullName>Pachytene checkpoint protein 2 homolog</fullName>
    </recommendedName>
</protein>
<name>PCH2_ORYSI</name>
<comment type="function">
    <text evidence="1">Plays a key role in chromosome recombination during meiosis.</text>
</comment>
<comment type="similarity">
    <text evidence="3">Belongs to the AAA ATPase family. PCH2 subfamily.</text>
</comment>
<comment type="sequence caution" evidence="3">
    <conflict type="erroneous gene model prediction">
        <sequence resource="EMBL-CDS" id="CAH66942"/>
    </conflict>
</comment>
<comment type="sequence caution" evidence="3">
    <conflict type="erroneous gene model prediction">
        <sequence resource="EMBL-CDS" id="EAY94548"/>
    </conflict>
</comment>
<feature type="chain" id="PRO_0000410927" description="Pachytene checkpoint protein 2 homolog">
    <location>
        <begin position="1"/>
        <end position="471"/>
    </location>
</feature>
<feature type="binding site" evidence="2">
    <location>
        <begin position="213"/>
        <end position="220"/>
    </location>
    <ligand>
        <name>ATP</name>
        <dbReference type="ChEBI" id="CHEBI:30616"/>
    </ligand>
</feature>
<feature type="sequence conflict" description="In Ref. 1; CAH66942." evidence="3" ref="1">
    <original>S</original>
    <variation>SA</variation>
    <location>
        <position position="15"/>
    </location>
</feature>
<feature type="sequence conflict" description="In Ref. 1; CAH66942." evidence="3" ref="1">
    <original>SAAAV</original>
    <variation>AATAA</variation>
    <location>
        <begin position="28"/>
        <end position="32"/>
    </location>
</feature>
<feature type="sequence conflict" description="In Ref. 1; CAH66942." evidence="3" ref="1">
    <original>N</original>
    <variation>S</variation>
    <location>
        <position position="105"/>
    </location>
</feature>
<feature type="sequence conflict" description="In Ref. 1; CAH66942." evidence="3" ref="1">
    <original>T</original>
    <variation>I</variation>
    <location>
        <position position="118"/>
    </location>
</feature>
<reference key="1">
    <citation type="journal article" date="2002" name="Nature">
        <title>Sequence and analysis of rice chromosome 4.</title>
        <authorList>
            <person name="Feng Q."/>
            <person name="Zhang Y."/>
            <person name="Hao P."/>
            <person name="Wang S."/>
            <person name="Fu G."/>
            <person name="Huang Y."/>
            <person name="Li Y."/>
            <person name="Zhu J."/>
            <person name="Liu Y."/>
            <person name="Hu X."/>
            <person name="Jia P."/>
            <person name="Zhang Y."/>
            <person name="Zhao Q."/>
            <person name="Ying K."/>
            <person name="Yu S."/>
            <person name="Tang Y."/>
            <person name="Weng Q."/>
            <person name="Zhang L."/>
            <person name="Lu Y."/>
            <person name="Mu J."/>
            <person name="Lu Y."/>
            <person name="Zhang L.S."/>
            <person name="Yu Z."/>
            <person name="Fan D."/>
            <person name="Liu X."/>
            <person name="Lu T."/>
            <person name="Li C."/>
            <person name="Wu Y."/>
            <person name="Sun T."/>
            <person name="Lei H."/>
            <person name="Li T."/>
            <person name="Hu H."/>
            <person name="Guan J."/>
            <person name="Wu M."/>
            <person name="Zhang R."/>
            <person name="Zhou B."/>
            <person name="Chen Z."/>
            <person name="Chen L."/>
            <person name="Jin Z."/>
            <person name="Wang R."/>
            <person name="Yin H."/>
            <person name="Cai Z."/>
            <person name="Ren S."/>
            <person name="Lv G."/>
            <person name="Gu W."/>
            <person name="Zhu G."/>
            <person name="Tu Y."/>
            <person name="Jia J."/>
            <person name="Zhang Y."/>
            <person name="Chen J."/>
            <person name="Kang H."/>
            <person name="Chen X."/>
            <person name="Shao C."/>
            <person name="Sun Y."/>
            <person name="Hu Q."/>
            <person name="Zhang X."/>
            <person name="Zhang W."/>
            <person name="Wang L."/>
            <person name="Ding C."/>
            <person name="Sheng H."/>
            <person name="Gu J."/>
            <person name="Chen S."/>
            <person name="Ni L."/>
            <person name="Zhu F."/>
            <person name="Chen W."/>
            <person name="Lan L."/>
            <person name="Lai Y."/>
            <person name="Cheng Z."/>
            <person name="Gu M."/>
            <person name="Jiang J."/>
            <person name="Li J."/>
            <person name="Hong G."/>
            <person name="Xue Y."/>
            <person name="Han B."/>
        </authorList>
    </citation>
    <scope>NUCLEOTIDE SEQUENCE [LARGE SCALE GENOMIC DNA]</scope>
    <source>
        <strain>cv. Guang-Lu-Ai No.4</strain>
    </source>
</reference>
<reference key="2">
    <citation type="journal article" date="2005" name="PLoS Biol.">
        <title>The genomes of Oryza sativa: a history of duplications.</title>
        <authorList>
            <person name="Yu J."/>
            <person name="Wang J."/>
            <person name="Lin W."/>
            <person name="Li S."/>
            <person name="Li H."/>
            <person name="Zhou J."/>
            <person name="Ni P."/>
            <person name="Dong W."/>
            <person name="Hu S."/>
            <person name="Zeng C."/>
            <person name="Zhang J."/>
            <person name="Zhang Y."/>
            <person name="Li R."/>
            <person name="Xu Z."/>
            <person name="Li S."/>
            <person name="Li X."/>
            <person name="Zheng H."/>
            <person name="Cong L."/>
            <person name="Lin L."/>
            <person name="Yin J."/>
            <person name="Geng J."/>
            <person name="Li G."/>
            <person name="Shi J."/>
            <person name="Liu J."/>
            <person name="Lv H."/>
            <person name="Li J."/>
            <person name="Wang J."/>
            <person name="Deng Y."/>
            <person name="Ran L."/>
            <person name="Shi X."/>
            <person name="Wang X."/>
            <person name="Wu Q."/>
            <person name="Li C."/>
            <person name="Ren X."/>
            <person name="Wang J."/>
            <person name="Wang X."/>
            <person name="Li D."/>
            <person name="Liu D."/>
            <person name="Zhang X."/>
            <person name="Ji Z."/>
            <person name="Zhao W."/>
            <person name="Sun Y."/>
            <person name="Zhang Z."/>
            <person name="Bao J."/>
            <person name="Han Y."/>
            <person name="Dong L."/>
            <person name="Ji J."/>
            <person name="Chen P."/>
            <person name="Wu S."/>
            <person name="Liu J."/>
            <person name="Xiao Y."/>
            <person name="Bu D."/>
            <person name="Tan J."/>
            <person name="Yang L."/>
            <person name="Ye C."/>
            <person name="Zhang J."/>
            <person name="Xu J."/>
            <person name="Zhou Y."/>
            <person name="Yu Y."/>
            <person name="Zhang B."/>
            <person name="Zhuang S."/>
            <person name="Wei H."/>
            <person name="Liu B."/>
            <person name="Lei M."/>
            <person name="Yu H."/>
            <person name="Li Y."/>
            <person name="Xu H."/>
            <person name="Wei S."/>
            <person name="He X."/>
            <person name="Fang L."/>
            <person name="Zhang Z."/>
            <person name="Zhang Y."/>
            <person name="Huang X."/>
            <person name="Su Z."/>
            <person name="Tong W."/>
            <person name="Li J."/>
            <person name="Tong Z."/>
            <person name="Li S."/>
            <person name="Ye J."/>
            <person name="Wang L."/>
            <person name="Fang L."/>
            <person name="Lei T."/>
            <person name="Chen C.-S."/>
            <person name="Chen H.-C."/>
            <person name="Xu Z."/>
            <person name="Li H."/>
            <person name="Huang H."/>
            <person name="Zhang F."/>
            <person name="Xu H."/>
            <person name="Li N."/>
            <person name="Zhao C."/>
            <person name="Li S."/>
            <person name="Dong L."/>
            <person name="Huang Y."/>
            <person name="Li L."/>
            <person name="Xi Y."/>
            <person name="Qi Q."/>
            <person name="Li W."/>
            <person name="Zhang B."/>
            <person name="Hu W."/>
            <person name="Zhang Y."/>
            <person name="Tian X."/>
            <person name="Jiao Y."/>
            <person name="Liang X."/>
            <person name="Jin J."/>
            <person name="Gao L."/>
            <person name="Zheng W."/>
            <person name="Hao B."/>
            <person name="Liu S.-M."/>
            <person name="Wang W."/>
            <person name="Yuan L."/>
            <person name="Cao M."/>
            <person name="McDermott J."/>
            <person name="Samudrala R."/>
            <person name="Wang J."/>
            <person name="Wong G.K.-S."/>
            <person name="Yang H."/>
        </authorList>
    </citation>
    <scope>NUCLEOTIDE SEQUENCE [LARGE SCALE GENOMIC DNA]</scope>
    <source>
        <strain>cv. 93-11</strain>
    </source>
</reference>
<accession>A2XUN8</accession>
<accession>Q01JZ0</accession>
<dbReference type="EMBL" id="CR855156">
    <property type="protein sequence ID" value="CAH66942.1"/>
    <property type="status" value="ALT_SEQ"/>
    <property type="molecule type" value="Genomic_DNA"/>
</dbReference>
<dbReference type="EMBL" id="CM000129">
    <property type="protein sequence ID" value="EAY94548.1"/>
    <property type="status" value="ALT_SEQ"/>
    <property type="molecule type" value="Genomic_DNA"/>
</dbReference>
<dbReference type="SMR" id="A2XUN8"/>
<dbReference type="STRING" id="39946.A2XUN8"/>
<dbReference type="HOGENOM" id="CLU_028208_0_1_1"/>
<dbReference type="Proteomes" id="UP000007015">
    <property type="component" value="Chromosome 4"/>
</dbReference>
<dbReference type="GO" id="GO:0005694">
    <property type="term" value="C:chromosome"/>
    <property type="evidence" value="ECO:0007669"/>
    <property type="project" value="TreeGrafter"/>
</dbReference>
<dbReference type="GO" id="GO:0005634">
    <property type="term" value="C:nucleus"/>
    <property type="evidence" value="ECO:0007669"/>
    <property type="project" value="TreeGrafter"/>
</dbReference>
<dbReference type="GO" id="GO:0005524">
    <property type="term" value="F:ATP binding"/>
    <property type="evidence" value="ECO:0007669"/>
    <property type="project" value="UniProtKB-KW"/>
</dbReference>
<dbReference type="GO" id="GO:0016887">
    <property type="term" value="F:ATP hydrolysis activity"/>
    <property type="evidence" value="ECO:0007669"/>
    <property type="project" value="InterPro"/>
</dbReference>
<dbReference type="GO" id="GO:0051598">
    <property type="term" value="P:meiotic recombination checkpoint signaling"/>
    <property type="evidence" value="ECO:0007669"/>
    <property type="project" value="TreeGrafter"/>
</dbReference>
<dbReference type="GO" id="GO:0007131">
    <property type="term" value="P:reciprocal meiotic recombination"/>
    <property type="evidence" value="ECO:0007669"/>
    <property type="project" value="TreeGrafter"/>
</dbReference>
<dbReference type="CDD" id="cd19508">
    <property type="entry name" value="RecA-like_Pch2-like"/>
    <property type="match status" value="1"/>
</dbReference>
<dbReference type="FunFam" id="3.40.50.300:FF:000680">
    <property type="entry name" value="pachytene checkpoint protein 2 homolog"/>
    <property type="match status" value="1"/>
</dbReference>
<dbReference type="Gene3D" id="3.40.50.300">
    <property type="entry name" value="P-loop containing nucleotide triphosphate hydrolases"/>
    <property type="match status" value="1"/>
</dbReference>
<dbReference type="InterPro" id="IPR003593">
    <property type="entry name" value="AAA+_ATPase"/>
</dbReference>
<dbReference type="InterPro" id="IPR003959">
    <property type="entry name" value="ATPase_AAA_core"/>
</dbReference>
<dbReference type="InterPro" id="IPR003960">
    <property type="entry name" value="ATPase_AAA_CS"/>
</dbReference>
<dbReference type="InterPro" id="IPR001270">
    <property type="entry name" value="ClpA/B"/>
</dbReference>
<dbReference type="InterPro" id="IPR027417">
    <property type="entry name" value="P-loop_NTPase"/>
</dbReference>
<dbReference type="InterPro" id="IPR044539">
    <property type="entry name" value="Pch2-like"/>
</dbReference>
<dbReference type="PANTHER" id="PTHR45991">
    <property type="entry name" value="PACHYTENE CHECKPOINT PROTEIN 2"/>
    <property type="match status" value="1"/>
</dbReference>
<dbReference type="PANTHER" id="PTHR45991:SF1">
    <property type="entry name" value="PACHYTENE CHECKPOINT PROTEIN 2 HOMOLOG"/>
    <property type="match status" value="1"/>
</dbReference>
<dbReference type="Pfam" id="PF00004">
    <property type="entry name" value="AAA"/>
    <property type="match status" value="1"/>
</dbReference>
<dbReference type="Pfam" id="PF23242">
    <property type="entry name" value="AAA_lid_TRIP13_C"/>
    <property type="match status" value="1"/>
</dbReference>
<dbReference type="Pfam" id="PF23563">
    <property type="entry name" value="TRIP13_N"/>
    <property type="match status" value="1"/>
</dbReference>
<dbReference type="PRINTS" id="PR00300">
    <property type="entry name" value="CLPPROTEASEA"/>
</dbReference>
<dbReference type="SMART" id="SM00382">
    <property type="entry name" value="AAA"/>
    <property type="match status" value="1"/>
</dbReference>
<dbReference type="SUPFAM" id="SSF52540">
    <property type="entry name" value="P-loop containing nucleoside triphosphate hydrolases"/>
    <property type="match status" value="1"/>
</dbReference>
<dbReference type="PROSITE" id="PS00674">
    <property type="entry name" value="AAA"/>
    <property type="match status" value="1"/>
</dbReference>
<keyword id="KW-0067">ATP-binding</keyword>
<keyword id="KW-0469">Meiosis</keyword>
<keyword id="KW-0547">Nucleotide-binding</keyword>
<keyword id="KW-1185">Reference proteome</keyword>
<gene>
    <name type="ORF">OsI_16324</name>
    <name type="ORF">OSIGBa0116M22.9</name>
</gene>
<organism>
    <name type="scientific">Oryza sativa subsp. indica</name>
    <name type="common">Rice</name>
    <dbReference type="NCBI Taxonomy" id="39946"/>
    <lineage>
        <taxon>Eukaryota</taxon>
        <taxon>Viridiplantae</taxon>
        <taxon>Streptophyta</taxon>
        <taxon>Embryophyta</taxon>
        <taxon>Tracheophyta</taxon>
        <taxon>Spermatophyta</taxon>
        <taxon>Magnoliopsida</taxon>
        <taxon>Liliopsida</taxon>
        <taxon>Poales</taxon>
        <taxon>Poaceae</taxon>
        <taxon>BOP clade</taxon>
        <taxon>Oryzoideae</taxon>
        <taxon>Oryzeae</taxon>
        <taxon>Oryzinae</taxon>
        <taxon>Oryza</taxon>
        <taxon>Oryza sativa</taxon>
    </lineage>
</organism>
<sequence>MEVSFSAPPPPDAASAAAAAPSLVPAVSAAAVAATTVSCSPQPPTGSPSADDRILVSVEVLLHATSTARAEDVCAAVERMLEARSLSYVDGPVPIPNDDPFLLANVKRIQICDTDEWTENHKVLLFWQVRPVVHVFQLSEDGPGEEPGEDDTLSSFNEWALPAKEFDGLWESLLYEVGLKQRLLRYAASALLFTEKGVDPCLVSWNRIVLLHGPPGTGKTSLCKALAQKLSIRFKSRYSMCQLIEVNAHSLFSKWFSESGKLVAKLFQKIQEMVEEESNLVFVLIDEVESLAAARQAAISGSEPSDSIRVVNALLTQMDKLKSWPNVIILTTSNITTAIDIAFVDRADIKAYVGPPTLQARYEILRSCLQELLRVGILTHTQGGNSLCLLSYFSLMENQHCPEVADPHGSVHLSGLLHKAAEICEGLSGRTLRKLPFLAHASVANPSCCDASAFLHALIQTAQRELSESRG</sequence>
<evidence type="ECO:0000250" key="1"/>
<evidence type="ECO:0000255" key="2"/>
<evidence type="ECO:0000305" key="3"/>
<proteinExistence type="inferred from homology"/>